<comment type="function">
    <text evidence="4 6 9">Lectin which binds carbohydrates in vitro. Interacts through its lectin domain with glycan structures containing one or more Lewis X, Lewis Y or lactosamine motifs (PubMed:21945438). May play a role in abiotic stress responses (Probable). May play a role in abscisic acid-induced stomatal closure. May play a role in disease resistance against Pseudomonas syringae through its involvement in stomatal movement (PubMed:26259197).</text>
</comment>
<comment type="subunit">
    <text evidence="6">Interacts (via N-terminus) with ATS3A and ATS3B.</text>
</comment>
<comment type="subcellular location">
    <subcellularLocation>
        <location evidence="4">Nucleus</location>
    </subcellularLocation>
    <subcellularLocation>
        <location evidence="4">Cytoplasm</location>
    </subcellularLocation>
</comment>
<comment type="tissue specificity">
    <text evidence="6">Expressed in roots, rosette leaves, stems, cauline leaves and flowers.</text>
</comment>
<comment type="induction">
    <text evidence="3 5 6">Induced by osmotic shock and salt stress (PubMed:19930663, PubMed:25238657). Induced by abscisic acid (ABA) (PubMed:19930663, PubMed:25238657, PubMed:26259197). Induced by methyl jasmonate (PubMed:25238657). Induced by infection with the fungal pathogen B.cinerea and the bacterial pathogen P.synrigae pv. tomato (PubMed:19930663, PubMed:26259197).</text>
</comment>
<comment type="domain">
    <text evidence="4">The ricin B-type lectin domain binds glycan structures.</text>
</comment>
<comment type="miscellaneous">
    <text evidence="6">Plants silencing EULS3 exhibit an aberrant abscisic acid-induced stomatal closure.</text>
</comment>
<name>EULS3_ARATH</name>
<keyword id="KW-0963">Cytoplasm</keyword>
<keyword id="KW-0430">Lectin</keyword>
<keyword id="KW-0539">Nucleus</keyword>
<keyword id="KW-1185">Reference proteome</keyword>
<keyword id="KW-0346">Stress response</keyword>
<sequence>MEHHHQHHRHHQRDDGEDDRQSFGVPPPHVDAPPQPHGLYQSQPHFDPYAPTPQAPAPYRSETQFEPHAPPPYRSEPYFETPAPPPSFGHVSHVGHQSPNESYPPEHHRYGGYQQPSNSLLESHGDHSGVTHVAHHSSNQPQSSSGVYHKPDENRLPDNLAGLAGRATVKVYSKAEPNYNLTIRDGKVILAPADPSDEAQHWYKDEKYSTKVKDADGHPCFALVNKATGEAMKHSVGATHPVHLIRYVPDKLDESVLWTESKDFGDGYRTIRMVNNTRLNVDAYHGDSKSGGVRDGTTIVLWDWNKGDNQLWKIFPF</sequence>
<evidence type="ECO:0000255" key="1">
    <source>
        <dbReference type="PROSITE-ProRule" id="PRU00174"/>
    </source>
</evidence>
<evidence type="ECO:0000256" key="2">
    <source>
        <dbReference type="SAM" id="MobiDB-lite"/>
    </source>
</evidence>
<evidence type="ECO:0000269" key="3">
    <source>
    </source>
</evidence>
<evidence type="ECO:0000269" key="4">
    <source>
    </source>
</evidence>
<evidence type="ECO:0000269" key="5">
    <source>
    </source>
</evidence>
<evidence type="ECO:0000269" key="6">
    <source>
    </source>
</evidence>
<evidence type="ECO:0000303" key="7">
    <source>
    </source>
</evidence>
<evidence type="ECO:0000305" key="8"/>
<evidence type="ECO:0000305" key="9">
    <source>
    </source>
</evidence>
<evidence type="ECO:0000312" key="10">
    <source>
        <dbReference type="Araport" id="AT2G39050"/>
    </source>
</evidence>
<organism>
    <name type="scientific">Arabidopsis thaliana</name>
    <name type="common">Mouse-ear cress</name>
    <dbReference type="NCBI Taxonomy" id="3702"/>
    <lineage>
        <taxon>Eukaryota</taxon>
        <taxon>Viridiplantae</taxon>
        <taxon>Streptophyta</taxon>
        <taxon>Embryophyta</taxon>
        <taxon>Tracheophyta</taxon>
        <taxon>Spermatophyta</taxon>
        <taxon>Magnoliopsida</taxon>
        <taxon>eudicotyledons</taxon>
        <taxon>Gunneridae</taxon>
        <taxon>Pentapetalae</taxon>
        <taxon>rosids</taxon>
        <taxon>malvids</taxon>
        <taxon>Brassicales</taxon>
        <taxon>Brassicaceae</taxon>
        <taxon>Camelineae</taxon>
        <taxon>Arabidopsis</taxon>
    </lineage>
</organism>
<dbReference type="EMBL" id="AC005770">
    <property type="protein sequence ID" value="AAC79615.2"/>
    <property type="molecule type" value="Genomic_DNA"/>
</dbReference>
<dbReference type="EMBL" id="CP002685">
    <property type="protein sequence ID" value="AEC09630.1"/>
    <property type="molecule type" value="Genomic_DNA"/>
</dbReference>
<dbReference type="EMBL" id="AF411801">
    <property type="protein sequence ID" value="AAL06490.1"/>
    <property type="molecule type" value="mRNA"/>
</dbReference>
<dbReference type="EMBL" id="AY093795">
    <property type="protein sequence ID" value="AAM10411.1"/>
    <property type="molecule type" value="mRNA"/>
</dbReference>
<dbReference type="EMBL" id="AY087909">
    <property type="protein sequence ID" value="AAM65460.1"/>
    <property type="molecule type" value="mRNA"/>
</dbReference>
<dbReference type="PIR" id="E84812">
    <property type="entry name" value="E84812"/>
</dbReference>
<dbReference type="RefSeq" id="NP_565899.1">
    <property type="nucleotide sequence ID" value="NM_129462.3"/>
</dbReference>
<dbReference type="SMR" id="Q945P1"/>
<dbReference type="FunCoup" id="Q945P1">
    <property type="interactions" value="650"/>
</dbReference>
<dbReference type="IntAct" id="Q945P1">
    <property type="interactions" value="1"/>
</dbReference>
<dbReference type="STRING" id="3702.Q945P1"/>
<dbReference type="PaxDb" id="3702-AT2G39050.1"/>
<dbReference type="ProMEX" id="Q945P1"/>
<dbReference type="ProteomicsDB" id="222355"/>
<dbReference type="EnsemblPlants" id="AT2G39050.1">
    <property type="protein sequence ID" value="AT2G39050.1"/>
    <property type="gene ID" value="AT2G39050"/>
</dbReference>
<dbReference type="GeneID" id="818491"/>
<dbReference type="Gramene" id="AT2G39050.1">
    <property type="protein sequence ID" value="AT2G39050.1"/>
    <property type="gene ID" value="AT2G39050"/>
</dbReference>
<dbReference type="KEGG" id="ath:AT2G39050"/>
<dbReference type="Araport" id="AT2G39050"/>
<dbReference type="TAIR" id="AT2G39050">
    <property type="gene designation" value="EULS3"/>
</dbReference>
<dbReference type="eggNOG" id="ENOG502QTCR">
    <property type="taxonomic scope" value="Eukaryota"/>
</dbReference>
<dbReference type="HOGENOM" id="CLU_073954_0_0_1"/>
<dbReference type="InParanoid" id="Q945P1"/>
<dbReference type="OMA" id="TQHWVKD"/>
<dbReference type="PhylomeDB" id="Q945P1"/>
<dbReference type="CD-CODE" id="4299E36E">
    <property type="entry name" value="Nucleolus"/>
</dbReference>
<dbReference type="PRO" id="PR:Q945P1"/>
<dbReference type="Proteomes" id="UP000006548">
    <property type="component" value="Chromosome 2"/>
</dbReference>
<dbReference type="ExpressionAtlas" id="Q945P1">
    <property type="expression patterns" value="baseline and differential"/>
</dbReference>
<dbReference type="GO" id="GO:0005737">
    <property type="term" value="C:cytoplasm"/>
    <property type="evidence" value="ECO:0000314"/>
    <property type="project" value="TAIR"/>
</dbReference>
<dbReference type="GO" id="GO:0005794">
    <property type="term" value="C:Golgi apparatus"/>
    <property type="evidence" value="ECO:0007005"/>
    <property type="project" value="TAIR"/>
</dbReference>
<dbReference type="GO" id="GO:0005634">
    <property type="term" value="C:nucleus"/>
    <property type="evidence" value="ECO:0000314"/>
    <property type="project" value="TAIR"/>
</dbReference>
<dbReference type="GO" id="GO:0030246">
    <property type="term" value="F:carbohydrate binding"/>
    <property type="evidence" value="ECO:0000314"/>
    <property type="project" value="TAIR"/>
</dbReference>
<dbReference type="GO" id="GO:0042742">
    <property type="term" value="P:defense response to bacterium"/>
    <property type="evidence" value="ECO:0000315"/>
    <property type="project" value="TAIR"/>
</dbReference>
<dbReference type="GO" id="GO:0090332">
    <property type="term" value="P:stomatal closure"/>
    <property type="evidence" value="ECO:0000315"/>
    <property type="project" value="TAIR"/>
</dbReference>
<dbReference type="CDD" id="cd23431">
    <property type="entry name" value="beta-trefoil_Ricin_AtEULS3-like"/>
    <property type="match status" value="1"/>
</dbReference>
<dbReference type="Gene3D" id="2.80.10.50">
    <property type="match status" value="1"/>
</dbReference>
<dbReference type="InterPro" id="IPR040249">
    <property type="entry name" value="Ricin_B-like_lectin_EULS3-like"/>
</dbReference>
<dbReference type="InterPro" id="IPR035992">
    <property type="entry name" value="Ricin_B-like_lectins"/>
</dbReference>
<dbReference type="PANTHER" id="PTHR31257">
    <property type="entry name" value="RICIN B-LIKE LECTIN EULS3"/>
    <property type="match status" value="1"/>
</dbReference>
<dbReference type="PANTHER" id="PTHR31257:SF2">
    <property type="entry name" value="RICIN B-LIKE LECTIN EULS3"/>
    <property type="match status" value="1"/>
</dbReference>
<dbReference type="SUPFAM" id="SSF50370">
    <property type="entry name" value="Ricin B-like lectins"/>
    <property type="match status" value="1"/>
</dbReference>
<dbReference type="PROSITE" id="PS50231">
    <property type="entry name" value="RICIN_B_LECTIN"/>
    <property type="match status" value="1"/>
</dbReference>
<reference key="1">
    <citation type="journal article" date="1999" name="Nature">
        <title>Sequence and analysis of chromosome 2 of the plant Arabidopsis thaliana.</title>
        <authorList>
            <person name="Lin X."/>
            <person name="Kaul S."/>
            <person name="Rounsley S.D."/>
            <person name="Shea T.P."/>
            <person name="Benito M.-I."/>
            <person name="Town C.D."/>
            <person name="Fujii C.Y."/>
            <person name="Mason T.M."/>
            <person name="Bowman C.L."/>
            <person name="Barnstead M.E."/>
            <person name="Feldblyum T.V."/>
            <person name="Buell C.R."/>
            <person name="Ketchum K.A."/>
            <person name="Lee J.J."/>
            <person name="Ronning C.M."/>
            <person name="Koo H.L."/>
            <person name="Moffat K.S."/>
            <person name="Cronin L.A."/>
            <person name="Shen M."/>
            <person name="Pai G."/>
            <person name="Van Aken S."/>
            <person name="Umayam L."/>
            <person name="Tallon L.J."/>
            <person name="Gill J.E."/>
            <person name="Adams M.D."/>
            <person name="Carrera A.J."/>
            <person name="Creasy T.H."/>
            <person name="Goodman H.M."/>
            <person name="Somerville C.R."/>
            <person name="Copenhaver G.P."/>
            <person name="Preuss D."/>
            <person name="Nierman W.C."/>
            <person name="White O."/>
            <person name="Eisen J.A."/>
            <person name="Salzberg S.L."/>
            <person name="Fraser C.M."/>
            <person name="Venter J.C."/>
        </authorList>
    </citation>
    <scope>NUCLEOTIDE SEQUENCE [LARGE SCALE GENOMIC DNA]</scope>
    <source>
        <strain>cv. Columbia</strain>
    </source>
</reference>
<reference key="2">
    <citation type="journal article" date="2017" name="Plant J.">
        <title>Araport11: a complete reannotation of the Arabidopsis thaliana reference genome.</title>
        <authorList>
            <person name="Cheng C.Y."/>
            <person name="Krishnakumar V."/>
            <person name="Chan A.P."/>
            <person name="Thibaud-Nissen F."/>
            <person name="Schobel S."/>
            <person name="Town C.D."/>
        </authorList>
    </citation>
    <scope>GENOME REANNOTATION</scope>
    <source>
        <strain>cv. Columbia</strain>
    </source>
</reference>
<reference key="3">
    <citation type="journal article" date="2003" name="Science">
        <title>Empirical analysis of transcriptional activity in the Arabidopsis genome.</title>
        <authorList>
            <person name="Yamada K."/>
            <person name="Lim J."/>
            <person name="Dale J.M."/>
            <person name="Chen H."/>
            <person name="Shinn P."/>
            <person name="Palm C.J."/>
            <person name="Southwick A.M."/>
            <person name="Wu H.C."/>
            <person name="Kim C.J."/>
            <person name="Nguyen M."/>
            <person name="Pham P.K."/>
            <person name="Cheuk R.F."/>
            <person name="Karlin-Newmann G."/>
            <person name="Liu S.X."/>
            <person name="Lam B."/>
            <person name="Sakano H."/>
            <person name="Wu T."/>
            <person name="Yu G."/>
            <person name="Miranda M."/>
            <person name="Quach H.L."/>
            <person name="Tripp M."/>
            <person name="Chang C.H."/>
            <person name="Lee J.M."/>
            <person name="Toriumi M.J."/>
            <person name="Chan M.M."/>
            <person name="Tang C.C."/>
            <person name="Onodera C.S."/>
            <person name="Deng J.M."/>
            <person name="Akiyama K."/>
            <person name="Ansari Y."/>
            <person name="Arakawa T."/>
            <person name="Banh J."/>
            <person name="Banno F."/>
            <person name="Bowser L."/>
            <person name="Brooks S.Y."/>
            <person name="Carninci P."/>
            <person name="Chao Q."/>
            <person name="Choy N."/>
            <person name="Enju A."/>
            <person name="Goldsmith A.D."/>
            <person name="Gurjal M."/>
            <person name="Hansen N.F."/>
            <person name="Hayashizaki Y."/>
            <person name="Johnson-Hopson C."/>
            <person name="Hsuan V.W."/>
            <person name="Iida K."/>
            <person name="Karnes M."/>
            <person name="Khan S."/>
            <person name="Koesema E."/>
            <person name="Ishida J."/>
            <person name="Jiang P.X."/>
            <person name="Jones T."/>
            <person name="Kawai J."/>
            <person name="Kamiya A."/>
            <person name="Meyers C."/>
            <person name="Nakajima M."/>
            <person name="Narusaka M."/>
            <person name="Seki M."/>
            <person name="Sakurai T."/>
            <person name="Satou M."/>
            <person name="Tamse R."/>
            <person name="Vaysberg M."/>
            <person name="Wallender E.K."/>
            <person name="Wong C."/>
            <person name="Yamamura Y."/>
            <person name="Yuan S."/>
            <person name="Shinozaki K."/>
            <person name="Davis R.W."/>
            <person name="Theologis A."/>
            <person name="Ecker J.R."/>
        </authorList>
    </citation>
    <scope>NUCLEOTIDE SEQUENCE [LARGE SCALE MRNA]</scope>
    <source>
        <strain>cv. Columbia</strain>
    </source>
</reference>
<reference key="4">
    <citation type="submission" date="2002-03" db="EMBL/GenBank/DDBJ databases">
        <title>Full-length cDNA from Arabidopsis thaliana.</title>
        <authorList>
            <person name="Brover V.V."/>
            <person name="Troukhan M.E."/>
            <person name="Alexandrov N.A."/>
            <person name="Lu Y.-P."/>
            <person name="Flavell R.B."/>
            <person name="Feldmann K.A."/>
        </authorList>
    </citation>
    <scope>NUCLEOTIDE SEQUENCE [LARGE SCALE MRNA]</scope>
</reference>
<reference key="5">
    <citation type="journal article" date="2009" name="BMC Plant Biol.">
        <title>Proteins with an Euonymus lectin-like domain are ubiquitous in Embryophyta.</title>
        <authorList>
            <person name="Fouquaert E."/>
            <person name="Peumans W.J."/>
            <person name="Vandekerckhove T.T."/>
            <person name="Ongenaert M."/>
            <person name="Van Damme E.J."/>
        </authorList>
    </citation>
    <scope>INDUCTION</scope>
</reference>
<reference key="6">
    <citation type="journal article" date="2011" name="Biochem. Biophys. Res. Commun.">
        <title>Lectin activity of the nucleocytoplasmic EUL protein from Arabidopsis thaliana.</title>
        <authorList>
            <person name="Van Hove J."/>
            <person name="Fouquaert E."/>
            <person name="Smith D.F."/>
            <person name="Proost P."/>
            <person name="Van Damme E.J."/>
        </authorList>
    </citation>
    <scope>FUNCTION</scope>
    <scope>SUBCELLULAR LOCATION</scope>
</reference>
<reference key="7">
    <citation type="journal article" date="2014" name="J. Plant Physiol.">
        <title>Transcriptional profiling of the lectin ArathEULS3 from Arabidopsis thaliana toward abiotic stresses.</title>
        <authorList>
            <person name="Van Hove J."/>
            <person name="Stefanowicz K."/>
            <person name="De Schutter K."/>
            <person name="Eggermont L."/>
            <person name="Lannoo N."/>
            <person name="Al Atalah B."/>
            <person name="Van Damme E.J."/>
        </authorList>
    </citation>
    <scope>FUNCTION</scope>
    <scope>INDUCTION</scope>
</reference>
<reference key="8">
    <citation type="journal article" date="2015" name="Plant Sci.">
        <title>The Arabidopsis lectin EULS3 is involved in stomatal closure.</title>
        <authorList>
            <person name="Van Hove J."/>
            <person name="De Jaeger G."/>
            <person name="De Winne N."/>
            <person name="Guisez Y."/>
            <person name="Van Damme E.J."/>
        </authorList>
    </citation>
    <scope>FUNCTION</scope>
    <scope>INTERACTION WITH ATS3A AND ATS3B</scope>
    <scope>TISSUE SPECIFICITY</scope>
    <scope>INDUCTION BY PATHOGEN INFECTION</scope>
</reference>
<protein>
    <recommendedName>
        <fullName evidence="8">Ricin B-like lectin EULS3</fullName>
    </recommendedName>
    <alternativeName>
        <fullName evidence="8">Euonymus lectin S3</fullName>
        <shortName evidence="7">AtEULS3</shortName>
    </alternativeName>
</protein>
<feature type="chain" id="PRO_0000438376" description="Ricin B-like lectin EULS3">
    <location>
        <begin position="1"/>
        <end position="317"/>
    </location>
</feature>
<feature type="domain" description="Ricin B-type lectin" evidence="1">
    <location>
        <begin position="168"/>
        <end position="315"/>
    </location>
</feature>
<feature type="region of interest" description="Disordered" evidence="2">
    <location>
        <begin position="1"/>
        <end position="157"/>
    </location>
</feature>
<feature type="compositionally biased region" description="Basic residues" evidence="2">
    <location>
        <begin position="1"/>
        <end position="11"/>
    </location>
</feature>
<feature type="compositionally biased region" description="Pro residues" evidence="2">
    <location>
        <begin position="25"/>
        <end position="36"/>
    </location>
</feature>
<feature type="compositionally biased region" description="Polar residues" evidence="2">
    <location>
        <begin position="136"/>
        <end position="146"/>
    </location>
</feature>
<proteinExistence type="evidence at protein level"/>
<gene>
    <name evidence="7" type="primary">EULS3</name>
    <name evidence="10" type="ordered locus">At2g39050</name>
</gene>
<accession>Q945P1</accession>
<accession>Q9ZV03</accession>